<accession>A3LXM3</accession>
<protein>
    <recommendedName>
        <fullName>SWI5-dependent HO expression protein 3</fullName>
    </recommendedName>
</protein>
<proteinExistence type="inferred from homology"/>
<name>SHE3_PICST</name>
<keyword id="KW-0175">Coiled coil</keyword>
<keyword id="KW-0256">Endoplasmic reticulum</keyword>
<keyword id="KW-0472">Membrane</keyword>
<keyword id="KW-0509">mRNA transport</keyword>
<keyword id="KW-1185">Reference proteome</keyword>
<keyword id="KW-0694">RNA-binding</keyword>
<keyword id="KW-0813">Transport</keyword>
<evidence type="ECO:0000250" key="1"/>
<evidence type="ECO:0000255" key="2"/>
<evidence type="ECO:0000256" key="3">
    <source>
        <dbReference type="SAM" id="MobiDB-lite"/>
    </source>
</evidence>
<evidence type="ECO:0000305" key="4"/>
<comment type="function">
    <text evidence="1">RNA-binding protein that binds specific mRNAs including the ASH1 mRNA, coding for a repressor of the HO endonuclease. Part of the mRNA localization machinery that restricts accumulation of certain proteins to the bud and in the daughter cell. Required for the delivery of cortical endoplasmic reticulum into the emerging bud (By similarity).</text>
</comment>
<comment type="subcellular location">
    <subcellularLocation>
        <location evidence="1">Endoplasmic reticulum membrane</location>
        <topology evidence="1">Peripheral membrane protein</topology>
    </subcellularLocation>
</comment>
<comment type="similarity">
    <text evidence="4">Belongs to the SHE3 family.</text>
</comment>
<dbReference type="EMBL" id="CP000500">
    <property type="protein sequence ID" value="ABN67489.2"/>
    <property type="molecule type" value="Genomic_DNA"/>
</dbReference>
<dbReference type="RefSeq" id="XP_001385518.2">
    <property type="nucleotide sequence ID" value="XM_001385481.1"/>
</dbReference>
<dbReference type="SMR" id="A3LXM3"/>
<dbReference type="FunCoup" id="A3LXM3">
    <property type="interactions" value="1439"/>
</dbReference>
<dbReference type="STRING" id="322104.A3LXM3"/>
<dbReference type="GeneID" id="4840054"/>
<dbReference type="KEGG" id="pic:PICST_62098"/>
<dbReference type="eggNOG" id="ENOG502QSQX">
    <property type="taxonomic scope" value="Eukaryota"/>
</dbReference>
<dbReference type="HOGENOM" id="CLU_042310_0_0_1"/>
<dbReference type="InParanoid" id="A3LXM3"/>
<dbReference type="OMA" id="KTMDNLY"/>
<dbReference type="OrthoDB" id="6088208at2759"/>
<dbReference type="Proteomes" id="UP000002258">
    <property type="component" value="Chromosome 6"/>
</dbReference>
<dbReference type="GO" id="GO:0005789">
    <property type="term" value="C:endoplasmic reticulum membrane"/>
    <property type="evidence" value="ECO:0007669"/>
    <property type="project" value="UniProtKB-SubCell"/>
</dbReference>
<dbReference type="GO" id="GO:0003723">
    <property type="term" value="F:RNA binding"/>
    <property type="evidence" value="ECO:0007669"/>
    <property type="project" value="UniProtKB-KW"/>
</dbReference>
<dbReference type="GO" id="GO:0048309">
    <property type="term" value="P:endoplasmic reticulum inheritance"/>
    <property type="evidence" value="ECO:0007669"/>
    <property type="project" value="InterPro"/>
</dbReference>
<dbReference type="GO" id="GO:0051028">
    <property type="term" value="P:mRNA transport"/>
    <property type="evidence" value="ECO:0007669"/>
    <property type="project" value="UniProtKB-KW"/>
</dbReference>
<dbReference type="Gene3D" id="1.10.287.1490">
    <property type="match status" value="1"/>
</dbReference>
<dbReference type="InterPro" id="IPR031398">
    <property type="entry name" value="She3"/>
</dbReference>
<dbReference type="Pfam" id="PF17078">
    <property type="entry name" value="SHE3"/>
    <property type="match status" value="1"/>
</dbReference>
<feature type="chain" id="PRO_0000408935" description="SWI5-dependent HO expression protein 3">
    <location>
        <begin position="1"/>
        <end position="442"/>
    </location>
</feature>
<feature type="region of interest" description="Disordered" evidence="3">
    <location>
        <begin position="280"/>
        <end position="428"/>
    </location>
</feature>
<feature type="coiled-coil region" evidence="2">
    <location>
        <begin position="11"/>
        <end position="162"/>
    </location>
</feature>
<feature type="compositionally biased region" description="Polar residues" evidence="3">
    <location>
        <begin position="280"/>
        <end position="291"/>
    </location>
</feature>
<feature type="compositionally biased region" description="Polar residues" evidence="3">
    <location>
        <begin position="301"/>
        <end position="312"/>
    </location>
</feature>
<feature type="compositionally biased region" description="Basic residues" evidence="3">
    <location>
        <begin position="313"/>
        <end position="322"/>
    </location>
</feature>
<feature type="compositionally biased region" description="Polar residues" evidence="3">
    <location>
        <begin position="332"/>
        <end position="343"/>
    </location>
</feature>
<feature type="compositionally biased region" description="Polar residues" evidence="3">
    <location>
        <begin position="351"/>
        <end position="361"/>
    </location>
</feature>
<feature type="compositionally biased region" description="Low complexity" evidence="3">
    <location>
        <begin position="362"/>
        <end position="371"/>
    </location>
</feature>
<feature type="compositionally biased region" description="Low complexity" evidence="3">
    <location>
        <begin position="394"/>
        <end position="410"/>
    </location>
</feature>
<organism>
    <name type="scientific">Scheffersomyces stipitis (strain ATCC 58785 / CBS 6054 / NBRC 10063 / NRRL Y-11545)</name>
    <name type="common">Yeast</name>
    <name type="synonym">Pichia stipitis</name>
    <dbReference type="NCBI Taxonomy" id="322104"/>
    <lineage>
        <taxon>Eukaryota</taxon>
        <taxon>Fungi</taxon>
        <taxon>Dikarya</taxon>
        <taxon>Ascomycota</taxon>
        <taxon>Saccharomycotina</taxon>
        <taxon>Pichiomycetes</taxon>
        <taxon>Debaryomycetaceae</taxon>
        <taxon>Scheffersomyces</taxon>
    </lineage>
</organism>
<reference key="1">
    <citation type="journal article" date="2007" name="Nat. Biotechnol.">
        <title>Genome sequence of the lignocellulose-bioconverting and xylose-fermenting yeast Pichia stipitis.</title>
        <authorList>
            <person name="Jeffries T.W."/>
            <person name="Grigoriev I.V."/>
            <person name="Grimwood J."/>
            <person name="Laplaza J.M."/>
            <person name="Aerts A."/>
            <person name="Salamov A."/>
            <person name="Schmutz J."/>
            <person name="Lindquist E."/>
            <person name="Dehal P."/>
            <person name="Shapiro H."/>
            <person name="Jin Y.-S."/>
            <person name="Passoth V."/>
            <person name="Richardson P.M."/>
        </authorList>
    </citation>
    <scope>NUCLEOTIDE SEQUENCE [LARGE SCALE GENOMIC DNA]</scope>
    <source>
        <strain>ATCC 58785 / CBS 6054 / NBRC 10063 / NRRL Y-11545</strain>
    </source>
</reference>
<gene>
    <name type="primary">SHE3</name>
    <name type="ORF">PICST_62098</name>
</gene>
<sequence length="442" mass="49999">MEDNTASNKPTSRVIDSLHSQIDDLKTELETVKISHDDYKKKYVLVSQKNDSFVDQLANAKHENDMINALLKRKERRIADLEDQYNELSSSNESLQLNNKNMKIRCENLQQSSASSTAEYERLKIAYDALIASQVEYKRHYQKELNTLASKLEAYKTENKQRFQDLSSKLSSNDKDIDTLLDSMTNKRKALDNLYVNKNKTILELLTSLAKAAKIHGLDTKSTLEENTVAISSLLEKYPDLQEKILTHEKVEVDLDELISESNETLSNCSFESEATLVNSPELSDSASQSKNADHLKQDVKASSLSRSNTLQAKKRKNKRNSVRIDSKSGPDFSSITTPTTGQFALPKKPTFTSNNDNRGFSSRSPSDSSRNITPPHQDYEINPKFQNQNVHLNNDTNNKGGNYNNNNNNRSKRKSLYGGQYNSKRNSQIIDPNALNISMTT</sequence>